<sequence>MSPFAPFDAQTQVLLIDDDPHLRQALRQTLDLAGLKVATLDDARQLDTAQCKDWPGVVVSDIRMPGIDGMELLRQLHEQDADLPVILITGHGDVPLAVQAMRGGAYDFLEKPFPSDALLDSVRRALEVRRLVLENRTLRLALAERHELHGRLIGRSAGMQRLREQVGSLAAIQADVLVLGETGAGKEVVARALHDLSSRRDGPFVAINAGALAESVVESELFGHEAGAFTGAQKRRIGKFEYANGGTLFLDEIESMSLDVQVKLLRLLQERVVERLGSNQLIPLDIRIIAATKEDLRQAADQGRFRADLYYRLNVASLRIPPLRERGEDIPLLFRHFAEAGAMRHGLTPRELDAGQSARLLAYDWPGNVRELQNAAERFALGLGLSLDDGVLPDAADEPHNLSAKVEAFERSLIAAELERPHNSLRSVAEALGIPRKTLHDKLRKHGLPFNTPGENPPDDGE</sequence>
<accession>Q9HU19</accession>
<evidence type="ECO:0000250" key="1">
    <source>
        <dbReference type="UniProtKB" id="P13632"/>
    </source>
</evidence>
<evidence type="ECO:0000255" key="2">
    <source>
        <dbReference type="PROSITE-ProRule" id="PRU00169"/>
    </source>
</evidence>
<evidence type="ECO:0000255" key="3">
    <source>
        <dbReference type="PROSITE-ProRule" id="PRU00193"/>
    </source>
</evidence>
<evidence type="ECO:0000269" key="4">
    <source>
    </source>
</evidence>
<evidence type="ECO:0000303" key="5">
    <source>
    </source>
</evidence>
<evidence type="ECO:0000305" key="6"/>
<evidence type="ECO:0000312" key="7">
    <source>
        <dbReference type="EMBL" id="AAG08551.1"/>
    </source>
</evidence>
<dbReference type="EMBL" id="AE004091">
    <property type="protein sequence ID" value="AAG08551.1"/>
    <property type="molecule type" value="Genomic_DNA"/>
</dbReference>
<dbReference type="PIR" id="G83000">
    <property type="entry name" value="G83000"/>
</dbReference>
<dbReference type="RefSeq" id="NP_253853.1">
    <property type="nucleotide sequence ID" value="NC_002516.2"/>
</dbReference>
<dbReference type="RefSeq" id="WP_003096187.1">
    <property type="nucleotide sequence ID" value="NZ_QZGE01000002.1"/>
</dbReference>
<dbReference type="SMR" id="Q9HU19"/>
<dbReference type="STRING" id="208964.PA5166"/>
<dbReference type="PaxDb" id="208964-PA5166"/>
<dbReference type="GeneID" id="879963"/>
<dbReference type="KEGG" id="pae:PA5166"/>
<dbReference type="PATRIC" id="fig|208964.12.peg.5414"/>
<dbReference type="PseudoCAP" id="PA5166"/>
<dbReference type="HOGENOM" id="CLU_000445_0_5_6"/>
<dbReference type="InParanoid" id="Q9HU19"/>
<dbReference type="OrthoDB" id="9804019at2"/>
<dbReference type="PhylomeDB" id="Q9HU19"/>
<dbReference type="BioCyc" id="PAER208964:G1FZ6-5283-MONOMER"/>
<dbReference type="Proteomes" id="UP000002438">
    <property type="component" value="Chromosome"/>
</dbReference>
<dbReference type="GO" id="GO:0032993">
    <property type="term" value="C:protein-DNA complex"/>
    <property type="evidence" value="ECO:0000318"/>
    <property type="project" value="GO_Central"/>
</dbReference>
<dbReference type="GO" id="GO:0005524">
    <property type="term" value="F:ATP binding"/>
    <property type="evidence" value="ECO:0007669"/>
    <property type="project" value="UniProtKB-KW"/>
</dbReference>
<dbReference type="GO" id="GO:0016887">
    <property type="term" value="F:ATP hydrolysis activity"/>
    <property type="evidence" value="ECO:0007669"/>
    <property type="project" value="InterPro"/>
</dbReference>
<dbReference type="GO" id="GO:0000987">
    <property type="term" value="F:cis-regulatory region sequence-specific DNA binding"/>
    <property type="evidence" value="ECO:0000318"/>
    <property type="project" value="GO_Central"/>
</dbReference>
<dbReference type="GO" id="GO:0001216">
    <property type="term" value="F:DNA-binding transcription activator activity"/>
    <property type="evidence" value="ECO:0000318"/>
    <property type="project" value="GO_Central"/>
</dbReference>
<dbReference type="GO" id="GO:0000160">
    <property type="term" value="P:phosphorelay signal transduction system"/>
    <property type="evidence" value="ECO:0007669"/>
    <property type="project" value="UniProtKB-KW"/>
</dbReference>
<dbReference type="GO" id="GO:0045893">
    <property type="term" value="P:positive regulation of DNA-templated transcription"/>
    <property type="evidence" value="ECO:0000318"/>
    <property type="project" value="GO_Central"/>
</dbReference>
<dbReference type="GO" id="GO:0032892">
    <property type="term" value="P:positive regulation of organic acid transport"/>
    <property type="evidence" value="ECO:0000315"/>
    <property type="project" value="PseudoCAP"/>
</dbReference>
<dbReference type="CDD" id="cd00009">
    <property type="entry name" value="AAA"/>
    <property type="match status" value="1"/>
</dbReference>
<dbReference type="CDD" id="cd17549">
    <property type="entry name" value="REC_DctD-like"/>
    <property type="match status" value="1"/>
</dbReference>
<dbReference type="FunFam" id="3.40.50.2300:FF:000018">
    <property type="entry name" value="DNA-binding transcriptional regulator NtrC"/>
    <property type="match status" value="1"/>
</dbReference>
<dbReference type="FunFam" id="3.40.50.300:FF:000006">
    <property type="entry name" value="DNA-binding transcriptional regulator NtrC"/>
    <property type="match status" value="1"/>
</dbReference>
<dbReference type="Gene3D" id="1.10.8.60">
    <property type="match status" value="1"/>
</dbReference>
<dbReference type="Gene3D" id="3.40.50.2300">
    <property type="match status" value="1"/>
</dbReference>
<dbReference type="Gene3D" id="1.10.10.60">
    <property type="entry name" value="Homeodomain-like"/>
    <property type="match status" value="1"/>
</dbReference>
<dbReference type="Gene3D" id="3.40.50.300">
    <property type="entry name" value="P-loop containing nucleotide triphosphate hydrolases"/>
    <property type="match status" value="1"/>
</dbReference>
<dbReference type="InterPro" id="IPR003593">
    <property type="entry name" value="AAA+_ATPase"/>
</dbReference>
<dbReference type="InterPro" id="IPR011006">
    <property type="entry name" value="CheY-like_superfamily"/>
</dbReference>
<dbReference type="InterPro" id="IPR009057">
    <property type="entry name" value="Homeodomain-like_sf"/>
</dbReference>
<dbReference type="InterPro" id="IPR002197">
    <property type="entry name" value="HTH_Fis"/>
</dbReference>
<dbReference type="InterPro" id="IPR030828">
    <property type="entry name" value="HTH_TyrR"/>
</dbReference>
<dbReference type="InterPro" id="IPR027417">
    <property type="entry name" value="P-loop_NTPase"/>
</dbReference>
<dbReference type="InterPro" id="IPR001789">
    <property type="entry name" value="Sig_transdc_resp-reg_receiver"/>
</dbReference>
<dbReference type="InterPro" id="IPR002078">
    <property type="entry name" value="Sigma_54_int"/>
</dbReference>
<dbReference type="InterPro" id="IPR025662">
    <property type="entry name" value="Sigma_54_int_dom_ATP-bd_1"/>
</dbReference>
<dbReference type="InterPro" id="IPR025943">
    <property type="entry name" value="Sigma_54_int_dom_ATP-bd_2"/>
</dbReference>
<dbReference type="InterPro" id="IPR025944">
    <property type="entry name" value="Sigma_54_int_dom_CS"/>
</dbReference>
<dbReference type="PANTHER" id="PTHR32071:SF57">
    <property type="entry name" value="C4-DICARBOXYLATE TRANSPORT TRANSCRIPTIONAL REGULATORY PROTEIN DCTD"/>
    <property type="match status" value="1"/>
</dbReference>
<dbReference type="PANTHER" id="PTHR32071">
    <property type="entry name" value="TRANSCRIPTIONAL REGULATORY PROTEIN"/>
    <property type="match status" value="1"/>
</dbReference>
<dbReference type="Pfam" id="PF18024">
    <property type="entry name" value="HTH_50"/>
    <property type="match status" value="1"/>
</dbReference>
<dbReference type="Pfam" id="PF00072">
    <property type="entry name" value="Response_reg"/>
    <property type="match status" value="1"/>
</dbReference>
<dbReference type="Pfam" id="PF00158">
    <property type="entry name" value="Sigma54_activat"/>
    <property type="match status" value="1"/>
</dbReference>
<dbReference type="PRINTS" id="PR01590">
    <property type="entry name" value="HTHFIS"/>
</dbReference>
<dbReference type="SMART" id="SM00382">
    <property type="entry name" value="AAA"/>
    <property type="match status" value="1"/>
</dbReference>
<dbReference type="SMART" id="SM00448">
    <property type="entry name" value="REC"/>
    <property type="match status" value="1"/>
</dbReference>
<dbReference type="SUPFAM" id="SSF52172">
    <property type="entry name" value="CheY-like"/>
    <property type="match status" value="1"/>
</dbReference>
<dbReference type="SUPFAM" id="SSF46689">
    <property type="entry name" value="Homeodomain-like"/>
    <property type="match status" value="1"/>
</dbReference>
<dbReference type="SUPFAM" id="SSF52540">
    <property type="entry name" value="P-loop containing nucleoside triphosphate hydrolases"/>
    <property type="match status" value="1"/>
</dbReference>
<dbReference type="PROSITE" id="PS50110">
    <property type="entry name" value="RESPONSE_REGULATORY"/>
    <property type="match status" value="1"/>
</dbReference>
<dbReference type="PROSITE" id="PS00675">
    <property type="entry name" value="SIGMA54_INTERACT_1"/>
    <property type="match status" value="1"/>
</dbReference>
<dbReference type="PROSITE" id="PS00676">
    <property type="entry name" value="SIGMA54_INTERACT_2"/>
    <property type="match status" value="1"/>
</dbReference>
<dbReference type="PROSITE" id="PS00688">
    <property type="entry name" value="SIGMA54_INTERACT_3"/>
    <property type="match status" value="1"/>
</dbReference>
<dbReference type="PROSITE" id="PS50045">
    <property type="entry name" value="SIGMA54_INTERACT_4"/>
    <property type="match status" value="1"/>
</dbReference>
<proteinExistence type="inferred from homology"/>
<reference key="1">
    <citation type="journal article" date="2000" name="Nature">
        <title>Complete genome sequence of Pseudomonas aeruginosa PAO1, an opportunistic pathogen.</title>
        <authorList>
            <person name="Stover C.K."/>
            <person name="Pham X.-Q.T."/>
            <person name="Erwin A.L."/>
            <person name="Mizoguchi S.D."/>
            <person name="Warrener P."/>
            <person name="Hickey M.J."/>
            <person name="Brinkman F.S.L."/>
            <person name="Hufnagle W.O."/>
            <person name="Kowalik D.J."/>
            <person name="Lagrou M."/>
            <person name="Garber R.L."/>
            <person name="Goltry L."/>
            <person name="Tolentino E."/>
            <person name="Westbrock-Wadman S."/>
            <person name="Yuan Y."/>
            <person name="Brody L.L."/>
            <person name="Coulter S.N."/>
            <person name="Folger K.R."/>
            <person name="Kas A."/>
            <person name="Larbig K."/>
            <person name="Lim R.M."/>
            <person name="Smith K.A."/>
            <person name="Spencer D.H."/>
            <person name="Wong G.K.-S."/>
            <person name="Wu Z."/>
            <person name="Paulsen I.T."/>
            <person name="Reizer J."/>
            <person name="Saier M.H. Jr."/>
            <person name="Hancock R.E.W."/>
            <person name="Lory S."/>
            <person name="Olson M.V."/>
        </authorList>
    </citation>
    <scope>NUCLEOTIDE SEQUENCE [LARGE SCALE GENOMIC DNA]</scope>
    <source>
        <strain>ATCC 15692 / DSM 22644 / CIP 104116 / JCM 14847 / LMG 12228 / 1C / PRS 101 / PAO1</strain>
    </source>
</reference>
<reference key="2">
    <citation type="journal article" date="2011" name="J. Bacteriol.">
        <title>Identification of C(4)-dicarboxylate transport systems in Pseudomonas aeruginosa PAO1.</title>
        <authorList>
            <person name="Valentini M."/>
            <person name="Storelli N."/>
            <person name="Lapouge K."/>
        </authorList>
    </citation>
    <scope>FUNCTION</scope>
    <source>
        <strain>ATCC 15692 / DSM 22644 / CIP 104116 / JCM 14847 / LMG 12228 / 1C / PRS 101 / PAO1</strain>
    </source>
</reference>
<gene>
    <name evidence="5" type="primary">dctD</name>
    <name evidence="7" type="ordered locus">PA5166</name>
</gene>
<comment type="function">
    <text evidence="4">Member of the two-component regulatory system DctB/DctD, which regulates C4-dicarboxylate transport via regulation of expression of the dctPQM operon and dctA.</text>
</comment>
<comment type="PTM">
    <text evidence="1">Phosphorylated by DctB.</text>
</comment>
<feature type="chain" id="PRO_0000435377" description="C4-dicarboxylate transport transcriptional regulatory protein DctD">
    <location>
        <begin position="1"/>
        <end position="462"/>
    </location>
</feature>
<feature type="domain" description="Response regulatory" evidence="2">
    <location>
        <begin position="12"/>
        <end position="126"/>
    </location>
</feature>
<feature type="domain" description="Sigma-54 factor interaction" evidence="3">
    <location>
        <begin position="152"/>
        <end position="381"/>
    </location>
</feature>
<feature type="binding site" evidence="3">
    <location>
        <begin position="180"/>
        <end position="187"/>
    </location>
    <ligand>
        <name>ATP</name>
        <dbReference type="ChEBI" id="CHEBI:30616"/>
    </ligand>
</feature>
<feature type="binding site" evidence="3">
    <location>
        <begin position="243"/>
        <end position="252"/>
    </location>
    <ligand>
        <name>ATP</name>
        <dbReference type="ChEBI" id="CHEBI:30616"/>
    </ligand>
</feature>
<feature type="modified residue" description="4-aspartylphosphate" evidence="2">
    <location>
        <position position="61"/>
    </location>
</feature>
<name>DCTD_PSEAE</name>
<organism>
    <name type="scientific">Pseudomonas aeruginosa (strain ATCC 15692 / DSM 22644 / CIP 104116 / JCM 14847 / LMG 12228 / 1C / PRS 101 / PAO1)</name>
    <dbReference type="NCBI Taxonomy" id="208964"/>
    <lineage>
        <taxon>Bacteria</taxon>
        <taxon>Pseudomonadati</taxon>
        <taxon>Pseudomonadota</taxon>
        <taxon>Gammaproteobacteria</taxon>
        <taxon>Pseudomonadales</taxon>
        <taxon>Pseudomonadaceae</taxon>
        <taxon>Pseudomonas</taxon>
    </lineage>
</organism>
<keyword id="KW-0010">Activator</keyword>
<keyword id="KW-0067">ATP-binding</keyword>
<keyword id="KW-0238">DNA-binding</keyword>
<keyword id="KW-0547">Nucleotide-binding</keyword>
<keyword id="KW-0597">Phosphoprotein</keyword>
<keyword id="KW-1185">Reference proteome</keyword>
<keyword id="KW-0804">Transcription</keyword>
<keyword id="KW-0805">Transcription regulation</keyword>
<keyword id="KW-0902">Two-component regulatory system</keyword>
<protein>
    <recommendedName>
        <fullName evidence="6">C4-dicarboxylate transport transcriptional regulatory protein DctD</fullName>
    </recommendedName>
</protein>